<accession>Q81TR2</accession>
<accession>Q6I1Z6</accession>
<accession>Q6KVT5</accession>
<dbReference type="EC" id="2.7.8.-" evidence="1"/>
<dbReference type="EMBL" id="AE016879">
    <property type="protein sequence ID" value="AAP25165.1"/>
    <property type="molecule type" value="Genomic_DNA"/>
</dbReference>
<dbReference type="EMBL" id="AE017334">
    <property type="protein sequence ID" value="AAT30291.1"/>
    <property type="molecule type" value="Genomic_DNA"/>
</dbReference>
<dbReference type="EMBL" id="AE017225">
    <property type="protein sequence ID" value="AAT53435.1"/>
    <property type="molecule type" value="Genomic_DNA"/>
</dbReference>
<dbReference type="RefSeq" id="NP_843679.1">
    <property type="nucleotide sequence ID" value="NC_003997.3"/>
</dbReference>
<dbReference type="RefSeq" id="WP_000799204.1">
    <property type="nucleotide sequence ID" value="NZ_WXXJ01000044.1"/>
</dbReference>
<dbReference type="RefSeq" id="YP_027384.1">
    <property type="nucleotide sequence ID" value="NC_005945.1"/>
</dbReference>
<dbReference type="SMR" id="Q81TR2"/>
<dbReference type="IntAct" id="Q81TR2">
    <property type="interactions" value="2"/>
</dbReference>
<dbReference type="STRING" id="261594.GBAA_1204"/>
<dbReference type="DNASU" id="1087241"/>
<dbReference type="KEGG" id="ban:BA_1204"/>
<dbReference type="KEGG" id="banh:HYU01_06190"/>
<dbReference type="KEGG" id="bar:GBAA_1204"/>
<dbReference type="KEGG" id="bat:BAS1112"/>
<dbReference type="PATRIC" id="fig|198094.11.peg.1181"/>
<dbReference type="eggNOG" id="COG1502">
    <property type="taxonomic scope" value="Bacteria"/>
</dbReference>
<dbReference type="HOGENOM" id="CLU_038053_1_2_9"/>
<dbReference type="OMA" id="MPCLANN"/>
<dbReference type="OrthoDB" id="9762009at2"/>
<dbReference type="Proteomes" id="UP000000427">
    <property type="component" value="Chromosome"/>
</dbReference>
<dbReference type="Proteomes" id="UP000000594">
    <property type="component" value="Chromosome"/>
</dbReference>
<dbReference type="GO" id="GO:0005886">
    <property type="term" value="C:plasma membrane"/>
    <property type="evidence" value="ECO:0007669"/>
    <property type="project" value="UniProtKB-SubCell"/>
</dbReference>
<dbReference type="GO" id="GO:0008808">
    <property type="term" value="F:cardiolipin synthase activity"/>
    <property type="evidence" value="ECO:0007669"/>
    <property type="project" value="InterPro"/>
</dbReference>
<dbReference type="GO" id="GO:0032049">
    <property type="term" value="P:cardiolipin biosynthetic process"/>
    <property type="evidence" value="ECO:0007669"/>
    <property type="project" value="InterPro"/>
</dbReference>
<dbReference type="CDD" id="cd09110">
    <property type="entry name" value="PLDc_CLS_1"/>
    <property type="match status" value="1"/>
</dbReference>
<dbReference type="CDD" id="cd09112">
    <property type="entry name" value="PLDc_CLS_2"/>
    <property type="match status" value="1"/>
</dbReference>
<dbReference type="FunFam" id="3.30.870.10:FF:000014">
    <property type="entry name" value="Cardiolipin synthase"/>
    <property type="match status" value="1"/>
</dbReference>
<dbReference type="FunFam" id="3.30.870.10:FF:000021">
    <property type="entry name" value="Cardiolipin synthase"/>
    <property type="match status" value="1"/>
</dbReference>
<dbReference type="Gene3D" id="3.30.870.10">
    <property type="entry name" value="Endonuclease Chain A"/>
    <property type="match status" value="2"/>
</dbReference>
<dbReference type="HAMAP" id="MF_01916">
    <property type="entry name" value="Cardiolipin_synth_Cls"/>
    <property type="match status" value="1"/>
</dbReference>
<dbReference type="InterPro" id="IPR030874">
    <property type="entry name" value="Cardiolipin_synth_Firmi"/>
</dbReference>
<dbReference type="InterPro" id="IPR022924">
    <property type="entry name" value="Cardiolipin_synthase"/>
</dbReference>
<dbReference type="InterPro" id="IPR027379">
    <property type="entry name" value="CLS_N"/>
</dbReference>
<dbReference type="InterPro" id="IPR025202">
    <property type="entry name" value="PLD-like_dom"/>
</dbReference>
<dbReference type="InterPro" id="IPR001736">
    <property type="entry name" value="PLipase_D/transphosphatidylase"/>
</dbReference>
<dbReference type="NCBIfam" id="TIGR04265">
    <property type="entry name" value="bac_cardiolipin"/>
    <property type="match status" value="1"/>
</dbReference>
<dbReference type="PANTHER" id="PTHR21248">
    <property type="entry name" value="CARDIOLIPIN SYNTHASE"/>
    <property type="match status" value="1"/>
</dbReference>
<dbReference type="PANTHER" id="PTHR21248:SF20">
    <property type="entry name" value="CARDIOLIPIN SYNTHASE YWIE-RELATED"/>
    <property type="match status" value="1"/>
</dbReference>
<dbReference type="Pfam" id="PF13091">
    <property type="entry name" value="PLDc_2"/>
    <property type="match status" value="2"/>
</dbReference>
<dbReference type="Pfam" id="PF13396">
    <property type="entry name" value="PLDc_N"/>
    <property type="match status" value="1"/>
</dbReference>
<dbReference type="SMART" id="SM00155">
    <property type="entry name" value="PLDc"/>
    <property type="match status" value="2"/>
</dbReference>
<dbReference type="SUPFAM" id="SSF56024">
    <property type="entry name" value="Phospholipase D/nuclease"/>
    <property type="match status" value="2"/>
</dbReference>
<dbReference type="PROSITE" id="PS50035">
    <property type="entry name" value="PLD"/>
    <property type="match status" value="2"/>
</dbReference>
<organism>
    <name type="scientific">Bacillus anthracis</name>
    <dbReference type="NCBI Taxonomy" id="1392"/>
    <lineage>
        <taxon>Bacteria</taxon>
        <taxon>Bacillati</taxon>
        <taxon>Bacillota</taxon>
        <taxon>Bacilli</taxon>
        <taxon>Bacillales</taxon>
        <taxon>Bacillaceae</taxon>
        <taxon>Bacillus</taxon>
        <taxon>Bacillus cereus group</taxon>
    </lineage>
</organism>
<proteinExistence type="inferred from homology"/>
<name>CLS2_BACAN</name>
<feature type="chain" id="PRO_0000201242" description="Cardiolipin synthase 2">
    <location>
        <begin position="1"/>
        <end position="514"/>
    </location>
</feature>
<feature type="transmembrane region" description="Helical" evidence="1">
    <location>
        <begin position="7"/>
        <end position="27"/>
    </location>
</feature>
<feature type="transmembrane region" description="Helical" evidence="1">
    <location>
        <begin position="41"/>
        <end position="61"/>
    </location>
</feature>
<feature type="transmembrane region" description="Helical" evidence="1">
    <location>
        <begin position="71"/>
        <end position="91"/>
    </location>
</feature>
<feature type="domain" description="PLD phosphodiesterase 1" evidence="1">
    <location>
        <begin position="249"/>
        <end position="276"/>
    </location>
</feature>
<feature type="domain" description="PLD phosphodiesterase 2" evidence="1">
    <location>
        <begin position="427"/>
        <end position="454"/>
    </location>
</feature>
<feature type="active site" evidence="1">
    <location>
        <position position="254"/>
    </location>
</feature>
<feature type="active site" evidence="1">
    <location>
        <position position="256"/>
    </location>
</feature>
<feature type="active site" evidence="1">
    <location>
        <position position="261"/>
    </location>
</feature>
<feature type="active site" evidence="1">
    <location>
        <position position="432"/>
    </location>
</feature>
<feature type="active site" evidence="1">
    <location>
        <position position="434"/>
    </location>
</feature>
<feature type="active site" evidence="1">
    <location>
        <position position="439"/>
    </location>
</feature>
<comment type="function">
    <text evidence="1">Catalyzes the reversible phosphatidyl group transfer from one phosphatidylglycerol molecule to another to form cardiolipin (CL) (diphosphatidylglycerol) and glycerol.</text>
</comment>
<comment type="catalytic activity">
    <reaction evidence="1">
        <text>2 a 1,2-diacyl-sn-glycero-3-phospho-(1'-sn-glycerol) = a cardiolipin + glycerol</text>
        <dbReference type="Rhea" id="RHEA:31451"/>
        <dbReference type="ChEBI" id="CHEBI:17754"/>
        <dbReference type="ChEBI" id="CHEBI:62237"/>
        <dbReference type="ChEBI" id="CHEBI:64716"/>
    </reaction>
</comment>
<comment type="subcellular location">
    <subcellularLocation>
        <location evidence="1">Cell membrane</location>
        <topology evidence="1">Multi-pass membrane protein</topology>
    </subcellularLocation>
</comment>
<comment type="similarity">
    <text evidence="1">Belongs to the phospholipase D family. Cardiolipin synthase subfamily.</text>
</comment>
<protein>
    <recommendedName>
        <fullName evidence="1">Cardiolipin synthase 2</fullName>
        <shortName evidence="1">CL synthase 2</shortName>
        <ecNumber evidence="1">2.7.8.-</ecNumber>
    </recommendedName>
</protein>
<evidence type="ECO:0000255" key="1">
    <source>
        <dbReference type="HAMAP-Rule" id="MF_01916"/>
    </source>
</evidence>
<sequence>MKNTLKLIFFVLLLFALFVSLRMFIDVAFYSDVIGIKDVSILGIISILFTVSAFLIGCVIFLENRHPSKTLTWLIVLGIFPVFGFFAYLLFGQNFRRKRMFQKKALLDEQAFLQYKGHEDYEERILRNHKHQELLFRLADRLGALNISFQTETRTLTNGDETFQAILDGLKRAKHHIHMEYYIVRDDKLGTEIKDILIQKSKEGVVVRFLYDAVGSFKLSKSYIEELNDAGVEMIPFFPVRFPILNDKINYRNHRKIVIIDGNEGFVGGLNIGDEYLGKDKYFGFWRDTHLYLRGEAVQSLQLIFLQDWFYMTGEAVLAPEYLQAKAVEGEHWGGVQLVAGGPDNKWETIKHLYFAMIASARKSIWIATPYFIPDDDILSALKVAALAGIDVRLLMPSKPDKRTVFYASRSYFPELLDAGVKIYEYEKGFLHSKVVIVDSDLASIGTANMDMRSFHLNFEVNAFLYDTDSIRKLVQDFKDDLEESSEIHVDRFHKRRLHRRIVESTYRLLSPLL</sequence>
<gene>
    <name type="primary">cls2</name>
    <name type="synonym">cls-2</name>
    <name type="ordered locus">BA_1204</name>
    <name type="ordered locus">GBAA_1204</name>
    <name type="ordered locus">BAS1112</name>
</gene>
<reference key="1">
    <citation type="journal article" date="2003" name="Nature">
        <title>The genome sequence of Bacillus anthracis Ames and comparison to closely related bacteria.</title>
        <authorList>
            <person name="Read T.D."/>
            <person name="Peterson S.N."/>
            <person name="Tourasse N.J."/>
            <person name="Baillie L.W."/>
            <person name="Paulsen I.T."/>
            <person name="Nelson K.E."/>
            <person name="Tettelin H."/>
            <person name="Fouts D.E."/>
            <person name="Eisen J.A."/>
            <person name="Gill S.R."/>
            <person name="Holtzapple E.K."/>
            <person name="Okstad O.A."/>
            <person name="Helgason E."/>
            <person name="Rilstone J."/>
            <person name="Wu M."/>
            <person name="Kolonay J.F."/>
            <person name="Beanan M.J."/>
            <person name="Dodson R.J."/>
            <person name="Brinkac L.M."/>
            <person name="Gwinn M.L."/>
            <person name="DeBoy R.T."/>
            <person name="Madpu R."/>
            <person name="Daugherty S.C."/>
            <person name="Durkin A.S."/>
            <person name="Haft D.H."/>
            <person name="Nelson W.C."/>
            <person name="Peterson J.D."/>
            <person name="Pop M."/>
            <person name="Khouri H.M."/>
            <person name="Radune D."/>
            <person name="Benton J.L."/>
            <person name="Mahamoud Y."/>
            <person name="Jiang L."/>
            <person name="Hance I.R."/>
            <person name="Weidman J.F."/>
            <person name="Berry K.J."/>
            <person name="Plaut R.D."/>
            <person name="Wolf A.M."/>
            <person name="Watkins K.L."/>
            <person name="Nierman W.C."/>
            <person name="Hazen A."/>
            <person name="Cline R.T."/>
            <person name="Redmond C."/>
            <person name="Thwaite J.E."/>
            <person name="White O."/>
            <person name="Salzberg S.L."/>
            <person name="Thomason B."/>
            <person name="Friedlander A.M."/>
            <person name="Koehler T.M."/>
            <person name="Hanna P.C."/>
            <person name="Kolstoe A.-B."/>
            <person name="Fraser C.M."/>
        </authorList>
    </citation>
    <scope>NUCLEOTIDE SEQUENCE [LARGE SCALE GENOMIC DNA]</scope>
    <source>
        <strain>Ames / isolate Porton</strain>
    </source>
</reference>
<reference key="2">
    <citation type="journal article" date="2009" name="J. Bacteriol.">
        <title>The complete genome sequence of Bacillus anthracis Ames 'Ancestor'.</title>
        <authorList>
            <person name="Ravel J."/>
            <person name="Jiang L."/>
            <person name="Stanley S.T."/>
            <person name="Wilson M.R."/>
            <person name="Decker R.S."/>
            <person name="Read T.D."/>
            <person name="Worsham P."/>
            <person name="Keim P.S."/>
            <person name="Salzberg S.L."/>
            <person name="Fraser-Liggett C.M."/>
            <person name="Rasko D.A."/>
        </authorList>
    </citation>
    <scope>NUCLEOTIDE SEQUENCE [LARGE SCALE GENOMIC DNA]</scope>
    <source>
        <strain>Ames ancestor</strain>
    </source>
</reference>
<reference key="3">
    <citation type="submission" date="2004-01" db="EMBL/GenBank/DDBJ databases">
        <title>Complete genome sequence of Bacillus anthracis Sterne.</title>
        <authorList>
            <person name="Brettin T.S."/>
            <person name="Bruce D."/>
            <person name="Challacombe J.F."/>
            <person name="Gilna P."/>
            <person name="Han C."/>
            <person name="Hill K."/>
            <person name="Hitchcock P."/>
            <person name="Jackson P."/>
            <person name="Keim P."/>
            <person name="Longmire J."/>
            <person name="Lucas S."/>
            <person name="Okinaka R."/>
            <person name="Richardson P."/>
            <person name="Rubin E."/>
            <person name="Tice H."/>
        </authorList>
    </citation>
    <scope>NUCLEOTIDE SEQUENCE [LARGE SCALE GENOMIC DNA]</scope>
    <source>
        <strain>Sterne</strain>
    </source>
</reference>
<keyword id="KW-1003">Cell membrane</keyword>
<keyword id="KW-0444">Lipid biosynthesis</keyword>
<keyword id="KW-0443">Lipid metabolism</keyword>
<keyword id="KW-0472">Membrane</keyword>
<keyword id="KW-0594">Phospholipid biosynthesis</keyword>
<keyword id="KW-1208">Phospholipid metabolism</keyword>
<keyword id="KW-1185">Reference proteome</keyword>
<keyword id="KW-0677">Repeat</keyword>
<keyword id="KW-0808">Transferase</keyword>
<keyword id="KW-0812">Transmembrane</keyword>
<keyword id="KW-1133">Transmembrane helix</keyword>